<comment type="function">
    <text evidence="1">Usually encoded in the trnK tRNA gene intron. Probably assists in splicing its own and other chloroplast group II introns.</text>
</comment>
<comment type="subcellular location">
    <subcellularLocation>
        <location>Plastid</location>
        <location>Chloroplast</location>
    </subcellularLocation>
</comment>
<comment type="similarity">
    <text evidence="1">Belongs to the intron maturase 2 family. MatK subfamily.</text>
</comment>
<feature type="chain" id="PRO_0000143336" description="Maturase K">
    <location>
        <begin position="1"/>
        <end position="509"/>
    </location>
</feature>
<gene>
    <name evidence="1" type="primary">matK</name>
</gene>
<accession>Q7YMV6</accession>
<keyword id="KW-0150">Chloroplast</keyword>
<keyword id="KW-0507">mRNA processing</keyword>
<keyword id="KW-0934">Plastid</keyword>
<keyword id="KW-0694">RNA-binding</keyword>
<keyword id="KW-0819">tRNA processing</keyword>
<organism>
    <name type="scientific">Clematis ligusticifolia</name>
    <name type="common">Western white clematis</name>
    <name type="synonym">Clematis brevifolia</name>
    <dbReference type="NCBI Taxonomy" id="3454"/>
    <lineage>
        <taxon>Eukaryota</taxon>
        <taxon>Viridiplantae</taxon>
        <taxon>Streptophyta</taxon>
        <taxon>Embryophyta</taxon>
        <taxon>Tracheophyta</taxon>
        <taxon>Spermatophyta</taxon>
        <taxon>Magnoliopsida</taxon>
        <taxon>Ranunculales</taxon>
        <taxon>Ranunculaceae</taxon>
        <taxon>Ranunculoideae</taxon>
        <taxon>Anemoneae</taxon>
        <taxon>Clematis</taxon>
    </lineage>
</organism>
<dbReference type="EMBL" id="AB110519">
    <property type="protein sequence ID" value="BAC77192.1"/>
    <property type="molecule type" value="Genomic_DNA"/>
</dbReference>
<dbReference type="RefSeq" id="YP_010441608.1">
    <property type="nucleotide sequence ID" value="NC_065282.1"/>
</dbReference>
<dbReference type="GeneID" id="73944525"/>
<dbReference type="GO" id="GO:0009507">
    <property type="term" value="C:chloroplast"/>
    <property type="evidence" value="ECO:0007669"/>
    <property type="project" value="UniProtKB-SubCell"/>
</dbReference>
<dbReference type="GO" id="GO:0003723">
    <property type="term" value="F:RNA binding"/>
    <property type="evidence" value="ECO:0007669"/>
    <property type="project" value="UniProtKB-KW"/>
</dbReference>
<dbReference type="GO" id="GO:0006397">
    <property type="term" value="P:mRNA processing"/>
    <property type="evidence" value="ECO:0007669"/>
    <property type="project" value="UniProtKB-KW"/>
</dbReference>
<dbReference type="GO" id="GO:0008380">
    <property type="term" value="P:RNA splicing"/>
    <property type="evidence" value="ECO:0007669"/>
    <property type="project" value="UniProtKB-UniRule"/>
</dbReference>
<dbReference type="GO" id="GO:0008033">
    <property type="term" value="P:tRNA processing"/>
    <property type="evidence" value="ECO:0007669"/>
    <property type="project" value="UniProtKB-KW"/>
</dbReference>
<dbReference type="HAMAP" id="MF_01390">
    <property type="entry name" value="MatK"/>
    <property type="match status" value="1"/>
</dbReference>
<dbReference type="InterPro" id="IPR024937">
    <property type="entry name" value="Domain_X"/>
</dbReference>
<dbReference type="InterPro" id="IPR002866">
    <property type="entry name" value="Maturase_MatK"/>
</dbReference>
<dbReference type="InterPro" id="IPR024942">
    <property type="entry name" value="Maturase_MatK_N"/>
</dbReference>
<dbReference type="PANTHER" id="PTHR34811">
    <property type="entry name" value="MATURASE K"/>
    <property type="match status" value="1"/>
</dbReference>
<dbReference type="PANTHER" id="PTHR34811:SF1">
    <property type="entry name" value="MATURASE K"/>
    <property type="match status" value="1"/>
</dbReference>
<dbReference type="Pfam" id="PF01348">
    <property type="entry name" value="Intron_maturas2"/>
    <property type="match status" value="1"/>
</dbReference>
<dbReference type="Pfam" id="PF01824">
    <property type="entry name" value="MatK_N"/>
    <property type="match status" value="1"/>
</dbReference>
<proteinExistence type="inferred from homology"/>
<sequence>MEELQGYLKIDRSRERDFLYPLLFQEYIYALAHDHGLNKSILYEPMENLGYDKKYSLIIVKRLITRMYQQKHLIIFTNDSNPNFFFGHNKNLDSQMISEGVAVIVELPFSLRLVSSPESKEIDKSMTTLRSIHSIFPFLEDKLLHLNHVLDILIPYPIHLELLVQTLRSWIQDAPFLHLLRFFLYKYHNWNSLITQKTKMILFFSKENQRFFLFLYNFHVYESESIFVFLRKQSYHLRSTSSRAFLDRTHFYRKIEHFLVDFRNDFHTILWLFKDPFIQYFRFQGKSILSSKGTPLLMKKWKYYLVNLWECHFYFWSQPDRIHINQLSNHFIDFLGYLSSVRPTPSAVRSQMLEKSFIIDIVIKKFDTIVPIIPMIGSLAKAKFCNFSGHPISKPAWADSSDSDIIDRFGRICRNLSHYYSGSSKKKSLYRIKYILRLSCARTLARKHKSTVRSFLKRLGSEFLEEFLMEEEQVLSFILPRISYFSKRLYKERIWYFDIIRINDLTNLS</sequence>
<name>MATK_CLELI</name>
<reference key="1">
    <citation type="submission" date="2003-05" db="EMBL/GenBank/DDBJ databases">
        <title>Phylogenetic relationship of subtribe Clematidinae (Ranunculaceae) based on chloroplast and nuclear DNA sequences.</title>
        <authorList>
            <person name="Miikeda O."/>
            <person name="Kita K."/>
            <person name="Handa T."/>
            <person name="Yukawa T."/>
        </authorList>
    </citation>
    <scope>NUCLEOTIDE SEQUENCE [GENOMIC DNA]</scope>
</reference>
<evidence type="ECO:0000255" key="1">
    <source>
        <dbReference type="HAMAP-Rule" id="MF_01390"/>
    </source>
</evidence>
<protein>
    <recommendedName>
        <fullName evidence="1">Maturase K</fullName>
    </recommendedName>
    <alternativeName>
        <fullName evidence="1">Intron maturase</fullName>
    </alternativeName>
</protein>
<geneLocation type="chloroplast"/>